<gene>
    <name evidence="1" type="primary">tsf</name>
    <name type="ordered locus">Rpal_3267</name>
</gene>
<reference key="1">
    <citation type="submission" date="2008-05" db="EMBL/GenBank/DDBJ databases">
        <title>Complete sequence of Rhodopseudomonas palustris TIE-1.</title>
        <authorList>
            <consortium name="US DOE Joint Genome Institute"/>
            <person name="Lucas S."/>
            <person name="Copeland A."/>
            <person name="Lapidus A."/>
            <person name="Glavina del Rio T."/>
            <person name="Dalin E."/>
            <person name="Tice H."/>
            <person name="Pitluck S."/>
            <person name="Chain P."/>
            <person name="Malfatti S."/>
            <person name="Shin M."/>
            <person name="Vergez L."/>
            <person name="Lang D."/>
            <person name="Schmutz J."/>
            <person name="Larimer F."/>
            <person name="Land M."/>
            <person name="Hauser L."/>
            <person name="Kyrpides N."/>
            <person name="Mikhailova N."/>
            <person name="Emerson D."/>
            <person name="Newman D.K."/>
            <person name="Roden E."/>
            <person name="Richardson P."/>
        </authorList>
    </citation>
    <scope>NUCLEOTIDE SEQUENCE [LARGE SCALE GENOMIC DNA]</scope>
    <source>
        <strain>TIE-1</strain>
    </source>
</reference>
<evidence type="ECO:0000255" key="1">
    <source>
        <dbReference type="HAMAP-Rule" id="MF_00050"/>
    </source>
</evidence>
<protein>
    <recommendedName>
        <fullName evidence="1">Elongation factor Ts</fullName>
        <shortName evidence="1">EF-Ts</shortName>
    </recommendedName>
</protein>
<accession>B3Q7K3</accession>
<feature type="chain" id="PRO_1000116780" description="Elongation factor Ts">
    <location>
        <begin position="1"/>
        <end position="308"/>
    </location>
</feature>
<feature type="region of interest" description="Involved in Mg(2+) ion dislocation from EF-Tu" evidence="1">
    <location>
        <begin position="80"/>
        <end position="83"/>
    </location>
</feature>
<proteinExistence type="inferred from homology"/>
<sequence length="308" mass="32206">MATITAAMVKELRETTGVGMMDCKQALAETDGNIDAAIDWLRKKGLSKAAKKAGRVAAEGLIGALTDGTKGVVIEVNSETDFVARNEQFQGLVKMIAQVALKVGADLDAINAAPVGSTTVAGAIADAIATIGENMTLRRAAALSVSQGVVASYIHNAVIDGAGKMGVIVALESAGKADELAVLGRQLAMHVAAANPQALDPTSLDPAVVQREREVMADKYRQQGKPENMIEKIVENGLKTYYKEVCLLEQAYIHDEKGKSVAQAVKEAEGKVGAPIKIVGFVRYALGEGIEKQTSDFAAEVAAASGQK</sequence>
<keyword id="KW-0963">Cytoplasm</keyword>
<keyword id="KW-0251">Elongation factor</keyword>
<keyword id="KW-0648">Protein biosynthesis</keyword>
<dbReference type="EMBL" id="CP001096">
    <property type="protein sequence ID" value="ACF01769.1"/>
    <property type="molecule type" value="Genomic_DNA"/>
</dbReference>
<dbReference type="RefSeq" id="WP_011158470.1">
    <property type="nucleotide sequence ID" value="NC_011004.1"/>
</dbReference>
<dbReference type="SMR" id="B3Q7K3"/>
<dbReference type="GeneID" id="66894003"/>
<dbReference type="KEGG" id="rpt:Rpal_3267"/>
<dbReference type="HOGENOM" id="CLU_047155_2_0_5"/>
<dbReference type="OrthoDB" id="9808348at2"/>
<dbReference type="Proteomes" id="UP000001725">
    <property type="component" value="Chromosome"/>
</dbReference>
<dbReference type="GO" id="GO:0005737">
    <property type="term" value="C:cytoplasm"/>
    <property type="evidence" value="ECO:0007669"/>
    <property type="project" value="UniProtKB-SubCell"/>
</dbReference>
<dbReference type="GO" id="GO:0003746">
    <property type="term" value="F:translation elongation factor activity"/>
    <property type="evidence" value="ECO:0007669"/>
    <property type="project" value="UniProtKB-UniRule"/>
</dbReference>
<dbReference type="CDD" id="cd14275">
    <property type="entry name" value="UBA_EF-Ts"/>
    <property type="match status" value="1"/>
</dbReference>
<dbReference type="FunFam" id="1.10.286.20:FF:000001">
    <property type="entry name" value="Elongation factor Ts"/>
    <property type="match status" value="1"/>
</dbReference>
<dbReference type="FunFam" id="1.10.8.10:FF:000001">
    <property type="entry name" value="Elongation factor Ts"/>
    <property type="match status" value="1"/>
</dbReference>
<dbReference type="Gene3D" id="1.10.286.20">
    <property type="match status" value="1"/>
</dbReference>
<dbReference type="Gene3D" id="1.10.8.10">
    <property type="entry name" value="DNA helicase RuvA subunit, C-terminal domain"/>
    <property type="match status" value="1"/>
</dbReference>
<dbReference type="Gene3D" id="3.30.479.20">
    <property type="entry name" value="Elongation factor Ts, dimerisation domain"/>
    <property type="match status" value="2"/>
</dbReference>
<dbReference type="HAMAP" id="MF_00050">
    <property type="entry name" value="EF_Ts"/>
    <property type="match status" value="1"/>
</dbReference>
<dbReference type="InterPro" id="IPR036402">
    <property type="entry name" value="EF-Ts_dimer_sf"/>
</dbReference>
<dbReference type="InterPro" id="IPR001816">
    <property type="entry name" value="Transl_elong_EFTs/EF1B"/>
</dbReference>
<dbReference type="InterPro" id="IPR014039">
    <property type="entry name" value="Transl_elong_EFTs/EF1B_dimer"/>
</dbReference>
<dbReference type="InterPro" id="IPR018101">
    <property type="entry name" value="Transl_elong_Ts_CS"/>
</dbReference>
<dbReference type="InterPro" id="IPR009060">
    <property type="entry name" value="UBA-like_sf"/>
</dbReference>
<dbReference type="NCBIfam" id="TIGR00116">
    <property type="entry name" value="tsf"/>
    <property type="match status" value="1"/>
</dbReference>
<dbReference type="PANTHER" id="PTHR11741">
    <property type="entry name" value="ELONGATION FACTOR TS"/>
    <property type="match status" value="1"/>
</dbReference>
<dbReference type="PANTHER" id="PTHR11741:SF0">
    <property type="entry name" value="ELONGATION FACTOR TS, MITOCHONDRIAL"/>
    <property type="match status" value="1"/>
</dbReference>
<dbReference type="Pfam" id="PF00889">
    <property type="entry name" value="EF_TS"/>
    <property type="match status" value="1"/>
</dbReference>
<dbReference type="SUPFAM" id="SSF54713">
    <property type="entry name" value="Elongation factor Ts (EF-Ts), dimerisation domain"/>
    <property type="match status" value="2"/>
</dbReference>
<dbReference type="SUPFAM" id="SSF46934">
    <property type="entry name" value="UBA-like"/>
    <property type="match status" value="1"/>
</dbReference>
<dbReference type="PROSITE" id="PS01126">
    <property type="entry name" value="EF_TS_1"/>
    <property type="match status" value="1"/>
</dbReference>
<dbReference type="PROSITE" id="PS01127">
    <property type="entry name" value="EF_TS_2"/>
    <property type="match status" value="1"/>
</dbReference>
<name>EFTS_RHOPT</name>
<comment type="function">
    <text evidence="1">Associates with the EF-Tu.GDP complex and induces the exchange of GDP to GTP. It remains bound to the aminoacyl-tRNA.EF-Tu.GTP complex up to the GTP hydrolysis stage on the ribosome.</text>
</comment>
<comment type="subcellular location">
    <subcellularLocation>
        <location evidence="1">Cytoplasm</location>
    </subcellularLocation>
</comment>
<comment type="similarity">
    <text evidence="1">Belongs to the EF-Ts family.</text>
</comment>
<organism>
    <name type="scientific">Rhodopseudomonas palustris (strain TIE-1)</name>
    <dbReference type="NCBI Taxonomy" id="395960"/>
    <lineage>
        <taxon>Bacteria</taxon>
        <taxon>Pseudomonadati</taxon>
        <taxon>Pseudomonadota</taxon>
        <taxon>Alphaproteobacteria</taxon>
        <taxon>Hyphomicrobiales</taxon>
        <taxon>Nitrobacteraceae</taxon>
        <taxon>Rhodopseudomonas</taxon>
    </lineage>
</organism>